<reference key="1">
    <citation type="submission" date="2005-08" db="EMBL/GenBank/DDBJ databases">
        <authorList>
            <consortium name="NIH - Mammalian Gene Collection (MGC) project"/>
        </authorList>
    </citation>
    <scope>NUCLEOTIDE SEQUENCE [LARGE SCALE MRNA]</scope>
    <source>
        <strain>Crossbred X Angus</strain>
        <tissue>Liver</tissue>
    </source>
</reference>
<dbReference type="EMBL" id="BC102609">
    <property type="protein sequence ID" value="AAI02610.1"/>
    <property type="molecule type" value="mRNA"/>
</dbReference>
<dbReference type="RefSeq" id="NP_001070457.1">
    <property type="nucleotide sequence ID" value="NM_001076989.2"/>
</dbReference>
<dbReference type="SMR" id="Q3T016"/>
<dbReference type="FunCoup" id="Q3T016">
    <property type="interactions" value="8"/>
</dbReference>
<dbReference type="STRING" id="9913.ENSBTAP00000069885"/>
<dbReference type="PaxDb" id="9913-ENSBTAP00000008361"/>
<dbReference type="GeneID" id="767912"/>
<dbReference type="KEGG" id="bta:767912"/>
<dbReference type="CTD" id="128229"/>
<dbReference type="eggNOG" id="ENOG502SWRI">
    <property type="taxonomic scope" value="Eukaryota"/>
</dbReference>
<dbReference type="InParanoid" id="Q3T016"/>
<dbReference type="OrthoDB" id="9808383at2759"/>
<dbReference type="Proteomes" id="UP000009136">
    <property type="component" value="Unplaced"/>
</dbReference>
<dbReference type="GO" id="GO:0005737">
    <property type="term" value="C:cytoplasm"/>
    <property type="evidence" value="ECO:0000318"/>
    <property type="project" value="GO_Central"/>
</dbReference>
<dbReference type="GO" id="GO:0051087">
    <property type="term" value="F:protein-folding chaperone binding"/>
    <property type="evidence" value="ECO:0000250"/>
    <property type="project" value="UniProtKB"/>
</dbReference>
<dbReference type="InterPro" id="IPR031679">
    <property type="entry name" value="SSTK-IP"/>
</dbReference>
<dbReference type="PANTHER" id="PTHR37368">
    <property type="entry name" value="TSSK6-ACTIVATING CO-CHAPERONE PROTEIN"/>
    <property type="match status" value="1"/>
</dbReference>
<dbReference type="PANTHER" id="PTHR37368:SF1">
    <property type="entry name" value="TSSK6-ACTIVATING CO-CHAPERONE PROTEIN"/>
    <property type="match status" value="1"/>
</dbReference>
<dbReference type="Pfam" id="PF15836">
    <property type="entry name" value="SSTK-IP"/>
    <property type="match status" value="1"/>
</dbReference>
<organism>
    <name type="scientific">Bos taurus</name>
    <name type="common">Bovine</name>
    <dbReference type="NCBI Taxonomy" id="9913"/>
    <lineage>
        <taxon>Eukaryota</taxon>
        <taxon>Metazoa</taxon>
        <taxon>Chordata</taxon>
        <taxon>Craniata</taxon>
        <taxon>Vertebrata</taxon>
        <taxon>Euteleostomi</taxon>
        <taxon>Mammalia</taxon>
        <taxon>Eutheria</taxon>
        <taxon>Laurasiatheria</taxon>
        <taxon>Artiodactyla</taxon>
        <taxon>Ruminantia</taxon>
        <taxon>Pecora</taxon>
        <taxon>Bovidae</taxon>
        <taxon>Bovinae</taxon>
        <taxon>Bos</taxon>
    </lineage>
</organism>
<gene>
    <name type="primary">TSACC</name>
</gene>
<keyword id="KW-0143">Chaperone</keyword>
<keyword id="KW-1185">Reference proteome</keyword>
<proteinExistence type="evidence at transcript level"/>
<evidence type="ECO:0000250" key="1"/>
<evidence type="ECO:0000256" key="2">
    <source>
        <dbReference type="SAM" id="MobiDB-lite"/>
    </source>
</evidence>
<evidence type="ECO:0000305" key="3"/>
<sequence length="125" mass="13729">MEQLPSHPTNRRAKEEGNAVPLCRAKPSPSFINLQASSPPVTLLKILPTKLPSGINHKPKECLGLLECMYANLQLQTQLAQQQMAILENLQASKTQLAPGKENKNSSLPALSRNLLLSHLPQFSK</sequence>
<feature type="chain" id="PRO_0000271072" description="TSSK6-activating co-chaperone protein">
    <location>
        <begin position="1"/>
        <end position="125"/>
    </location>
</feature>
<feature type="region of interest" description="Disordered" evidence="2">
    <location>
        <begin position="1"/>
        <end position="22"/>
    </location>
</feature>
<accession>Q3T016</accession>
<name>TSACC_BOVIN</name>
<protein>
    <recommendedName>
        <fullName>TSSK6-activating co-chaperone protein</fullName>
    </recommendedName>
</protein>
<comment type="function">
    <text evidence="1">Co-chaperone that facilitates HSP-mediated activation of TSSK6.</text>
</comment>
<comment type="subunit">
    <text evidence="1">Interacts with HSP70. Associates with HSP90. Interacts with TSSK6; this interaction is direct and recruits TSACC to HSP90 (By similarity).</text>
</comment>
<comment type="similarity">
    <text evidence="3">Belongs to the TSACC family.</text>
</comment>